<organism>
    <name type="scientific">Danio rerio</name>
    <name type="common">Zebrafish</name>
    <name type="synonym">Brachydanio rerio</name>
    <dbReference type="NCBI Taxonomy" id="7955"/>
    <lineage>
        <taxon>Eukaryota</taxon>
        <taxon>Metazoa</taxon>
        <taxon>Chordata</taxon>
        <taxon>Craniata</taxon>
        <taxon>Vertebrata</taxon>
        <taxon>Euteleostomi</taxon>
        <taxon>Actinopterygii</taxon>
        <taxon>Neopterygii</taxon>
        <taxon>Teleostei</taxon>
        <taxon>Ostariophysi</taxon>
        <taxon>Cypriniformes</taxon>
        <taxon>Danionidae</taxon>
        <taxon>Danioninae</taxon>
        <taxon>Danio</taxon>
    </lineage>
</organism>
<accession>Q66HW4</accession>
<protein>
    <recommendedName>
        <fullName evidence="1">Glycosylated lysosomal membrane protein</fullName>
    </recommendedName>
    <alternativeName>
        <fullName evidence="1">Lysosomal protein NCU-G1</fullName>
    </alternativeName>
</protein>
<feature type="signal peptide" evidence="3">
    <location>
        <begin position="1"/>
        <end position="22"/>
    </location>
</feature>
<feature type="chain" id="PRO_0000284488" description="Glycosylated lysosomal membrane protein" evidence="4">
    <location>
        <begin position="23"/>
        <end position="407"/>
    </location>
</feature>
<feature type="topological domain" description="Lumenal" evidence="3">
    <location>
        <begin position="23"/>
        <end position="368"/>
    </location>
</feature>
<feature type="transmembrane region" description="Helical" evidence="3">
    <location>
        <begin position="369"/>
        <end position="389"/>
    </location>
</feature>
<feature type="topological domain" description="Cytoplasmic" evidence="3">
    <location>
        <begin position="390"/>
        <end position="407"/>
    </location>
</feature>
<feature type="short sequence motif" description="Lysosomal targeting motif" evidence="2">
    <location>
        <begin position="403"/>
        <end position="407"/>
    </location>
</feature>
<feature type="glycosylation site" description="N-linked (GlcNAc...) asparagine" evidence="3">
    <location>
        <position position="63"/>
    </location>
</feature>
<feature type="glycosylation site" description="N-linked (GlcNAc...) asparagine" evidence="3">
    <location>
        <position position="84"/>
    </location>
</feature>
<feature type="glycosylation site" description="N-linked (GlcNAc...) asparagine" evidence="3">
    <location>
        <position position="99"/>
    </location>
</feature>
<feature type="glycosylation site" description="N-linked (GlcNAc...) asparagine" evidence="3">
    <location>
        <position position="132"/>
    </location>
</feature>
<feature type="glycosylation site" description="N-linked (GlcNAc...) asparagine" evidence="3">
    <location>
        <position position="160"/>
    </location>
</feature>
<feature type="glycosylation site" description="N-linked (GlcNAc...) asparagine" evidence="3">
    <location>
        <position position="164"/>
    </location>
</feature>
<feature type="glycosylation site" description="N-linked (GlcNAc...) asparagine" evidence="3">
    <location>
        <position position="183"/>
    </location>
</feature>
<feature type="glycosylation site" description="N-linked (GlcNAc...) asparagine" evidence="3">
    <location>
        <position position="210"/>
    </location>
</feature>
<feature type="glycosylation site" description="N-linked (GlcNAc...) asparagine" evidence="3">
    <location>
        <position position="226"/>
    </location>
</feature>
<feature type="glycosylation site" description="N-linked (GlcNAc...) asparagine" evidence="3">
    <location>
        <position position="272"/>
    </location>
</feature>
<feature type="glycosylation site" description="N-linked (GlcNAc...) asparagine" evidence="3">
    <location>
        <position position="331"/>
    </location>
</feature>
<reference key="1">
    <citation type="journal article" date="2013" name="Nature">
        <title>The zebrafish reference genome sequence and its relationship to the human genome.</title>
        <authorList>
            <person name="Howe K."/>
            <person name="Clark M.D."/>
            <person name="Torroja C.F."/>
            <person name="Torrance J."/>
            <person name="Berthelot C."/>
            <person name="Muffato M."/>
            <person name="Collins J.E."/>
            <person name="Humphray S."/>
            <person name="McLaren K."/>
            <person name="Matthews L."/>
            <person name="McLaren S."/>
            <person name="Sealy I."/>
            <person name="Caccamo M."/>
            <person name="Churcher C."/>
            <person name="Scott C."/>
            <person name="Barrett J.C."/>
            <person name="Koch R."/>
            <person name="Rauch G.J."/>
            <person name="White S."/>
            <person name="Chow W."/>
            <person name="Kilian B."/>
            <person name="Quintais L.T."/>
            <person name="Guerra-Assuncao J.A."/>
            <person name="Zhou Y."/>
            <person name="Gu Y."/>
            <person name="Yen J."/>
            <person name="Vogel J.H."/>
            <person name="Eyre T."/>
            <person name="Redmond S."/>
            <person name="Banerjee R."/>
            <person name="Chi J."/>
            <person name="Fu B."/>
            <person name="Langley E."/>
            <person name="Maguire S.F."/>
            <person name="Laird G.K."/>
            <person name="Lloyd D."/>
            <person name="Kenyon E."/>
            <person name="Donaldson S."/>
            <person name="Sehra H."/>
            <person name="Almeida-King J."/>
            <person name="Loveland J."/>
            <person name="Trevanion S."/>
            <person name="Jones M."/>
            <person name="Quail M."/>
            <person name="Willey D."/>
            <person name="Hunt A."/>
            <person name="Burton J."/>
            <person name="Sims S."/>
            <person name="McLay K."/>
            <person name="Plumb B."/>
            <person name="Davis J."/>
            <person name="Clee C."/>
            <person name="Oliver K."/>
            <person name="Clark R."/>
            <person name="Riddle C."/>
            <person name="Elliot D."/>
            <person name="Threadgold G."/>
            <person name="Harden G."/>
            <person name="Ware D."/>
            <person name="Begum S."/>
            <person name="Mortimore B."/>
            <person name="Kerry G."/>
            <person name="Heath P."/>
            <person name="Phillimore B."/>
            <person name="Tracey A."/>
            <person name="Corby N."/>
            <person name="Dunn M."/>
            <person name="Johnson C."/>
            <person name="Wood J."/>
            <person name="Clark S."/>
            <person name="Pelan S."/>
            <person name="Griffiths G."/>
            <person name="Smith M."/>
            <person name="Glithero R."/>
            <person name="Howden P."/>
            <person name="Barker N."/>
            <person name="Lloyd C."/>
            <person name="Stevens C."/>
            <person name="Harley J."/>
            <person name="Holt K."/>
            <person name="Panagiotidis G."/>
            <person name="Lovell J."/>
            <person name="Beasley H."/>
            <person name="Henderson C."/>
            <person name="Gordon D."/>
            <person name="Auger K."/>
            <person name="Wright D."/>
            <person name="Collins J."/>
            <person name="Raisen C."/>
            <person name="Dyer L."/>
            <person name="Leung K."/>
            <person name="Robertson L."/>
            <person name="Ambridge K."/>
            <person name="Leongamornlert D."/>
            <person name="McGuire S."/>
            <person name="Gilderthorp R."/>
            <person name="Griffiths C."/>
            <person name="Manthravadi D."/>
            <person name="Nichol S."/>
            <person name="Barker G."/>
            <person name="Whitehead S."/>
            <person name="Kay M."/>
            <person name="Brown J."/>
            <person name="Murnane C."/>
            <person name="Gray E."/>
            <person name="Humphries M."/>
            <person name="Sycamore N."/>
            <person name="Barker D."/>
            <person name="Saunders D."/>
            <person name="Wallis J."/>
            <person name="Babbage A."/>
            <person name="Hammond S."/>
            <person name="Mashreghi-Mohammadi M."/>
            <person name="Barr L."/>
            <person name="Martin S."/>
            <person name="Wray P."/>
            <person name="Ellington A."/>
            <person name="Matthews N."/>
            <person name="Ellwood M."/>
            <person name="Woodmansey R."/>
            <person name="Clark G."/>
            <person name="Cooper J."/>
            <person name="Tromans A."/>
            <person name="Grafham D."/>
            <person name="Skuce C."/>
            <person name="Pandian R."/>
            <person name="Andrews R."/>
            <person name="Harrison E."/>
            <person name="Kimberley A."/>
            <person name="Garnett J."/>
            <person name="Fosker N."/>
            <person name="Hall R."/>
            <person name="Garner P."/>
            <person name="Kelly D."/>
            <person name="Bird C."/>
            <person name="Palmer S."/>
            <person name="Gehring I."/>
            <person name="Berger A."/>
            <person name="Dooley C.M."/>
            <person name="Ersan-Urun Z."/>
            <person name="Eser C."/>
            <person name="Geiger H."/>
            <person name="Geisler M."/>
            <person name="Karotki L."/>
            <person name="Kirn A."/>
            <person name="Konantz J."/>
            <person name="Konantz M."/>
            <person name="Oberlander M."/>
            <person name="Rudolph-Geiger S."/>
            <person name="Teucke M."/>
            <person name="Lanz C."/>
            <person name="Raddatz G."/>
            <person name="Osoegawa K."/>
            <person name="Zhu B."/>
            <person name="Rapp A."/>
            <person name="Widaa S."/>
            <person name="Langford C."/>
            <person name="Yang F."/>
            <person name="Schuster S.C."/>
            <person name="Carter N.P."/>
            <person name="Harrow J."/>
            <person name="Ning Z."/>
            <person name="Herrero J."/>
            <person name="Searle S.M."/>
            <person name="Enright A."/>
            <person name="Geisler R."/>
            <person name="Plasterk R.H."/>
            <person name="Lee C."/>
            <person name="Westerfield M."/>
            <person name="de Jong P.J."/>
            <person name="Zon L.I."/>
            <person name="Postlethwait J.H."/>
            <person name="Nusslein-Volhard C."/>
            <person name="Hubbard T.J."/>
            <person name="Roest Crollius H."/>
            <person name="Rogers J."/>
            <person name="Stemple D.L."/>
        </authorList>
    </citation>
    <scope>NUCLEOTIDE SEQUENCE [LARGE SCALE GENOMIC DNA]</scope>
    <source>
        <strain>Tuebingen</strain>
    </source>
</reference>
<reference key="2">
    <citation type="submission" date="2004-09" db="EMBL/GenBank/DDBJ databases">
        <authorList>
            <consortium name="NIH - Zebrafish Gene Collection (ZGC) project"/>
        </authorList>
    </citation>
    <scope>NUCLEOTIDE SEQUENCE [LARGE SCALE MRNA]</scope>
    <source>
        <tissue>Embryo</tissue>
    </source>
</reference>
<name>GLMP_DANRE</name>
<proteinExistence type="evidence at transcript level"/>
<comment type="function">
    <text evidence="2">Required to protect lysosomal transporter MFSD1 from lysosomal proteolysis and for MFSD1 lysosomal localization.</text>
</comment>
<comment type="subunit">
    <text evidence="2">Interacts (via lumenal domain) with lysosomal protein MFSD1; the interaction starts while both proteins are still in the endoplasmic reticulum and is required for stabilization of MFSD1 in lysosomes but has no direct effect on its targeting to lysosomes or transporter activity.</text>
</comment>
<comment type="subcellular location">
    <subcellularLocation>
        <location evidence="2">Lysosome membrane</location>
        <topology evidence="3">Single-pass type I membrane protein</topology>
        <orientation evidence="4">Lumenal side</orientation>
    </subcellularLocation>
</comment>
<comment type="similarity">
    <text evidence="4">Belongs to the GLMP family.</text>
</comment>
<sequence length="407" mass="44641">MSMFKVSLICSLLLVVFGAARGFLGRGDAFRRKVSVELNPGLAPPLSLPPGVGLVHLRGLGDNDTLHFVLCNAGAPALLLVHSNSTRSAVTVDWPEFINSSSAGSLRVEPESSVTYSSALVFTRLWEYDDVNNTADPQKAAESSFYPPYELQNFVWSELNTTLNQSEHTVVLCGGEKTQSFSNGSLCLQVSVFESQGRDEAWPSLLHNANSSQLRVWINGVTPRGNNSRFILEFQSVGDAGFQSRVDMRSSIDDEYTPSIFKVSEWVSSPVNSSSVWGFSQWKPVAYRKARPVFEDATACRHSELVFVNGTPPSAVIQAYFTHNTRIYGLNISFGLAEDPVFYDATKYISWTVLMGLGDPPSDSFSPLIIIIITVGLVTPLVFIILGGVFVCVRKRTSQSTAYEPIN</sequence>
<dbReference type="EMBL" id="CR391989">
    <property type="protein sequence ID" value="CAK10879.1"/>
    <property type="molecule type" value="Genomic_DNA"/>
</dbReference>
<dbReference type="EMBL" id="BC081645">
    <property type="protein sequence ID" value="AAH81645.1"/>
    <property type="molecule type" value="mRNA"/>
</dbReference>
<dbReference type="RefSeq" id="NP_001004580.1">
    <property type="nucleotide sequence ID" value="NM_001004580.1"/>
</dbReference>
<dbReference type="SMR" id="Q66HW4"/>
<dbReference type="FunCoup" id="Q66HW4">
    <property type="interactions" value="709"/>
</dbReference>
<dbReference type="GlyCosmos" id="Q66HW4">
    <property type="glycosylation" value="11 sites, No reported glycans"/>
</dbReference>
<dbReference type="PaxDb" id="7955-ENSDARP00000076889"/>
<dbReference type="Ensembl" id="ENSDART00000082454">
    <property type="protein sequence ID" value="ENSDARP00000076889"/>
    <property type="gene ID" value="ENSDARG00000059354"/>
</dbReference>
<dbReference type="GeneID" id="447841"/>
<dbReference type="KEGG" id="dre:447841"/>
<dbReference type="AGR" id="ZFIN:ZDB-GENE-040912-142"/>
<dbReference type="CTD" id="112770"/>
<dbReference type="ZFIN" id="ZDB-GENE-040912-142">
    <property type="gene designation" value="glmp"/>
</dbReference>
<dbReference type="eggNOG" id="ENOG502QSBM">
    <property type="taxonomic scope" value="Eukaryota"/>
</dbReference>
<dbReference type="HOGENOM" id="CLU_040225_0_0_1"/>
<dbReference type="InParanoid" id="Q66HW4"/>
<dbReference type="OMA" id="TLHYLWD"/>
<dbReference type="OrthoDB" id="6264340at2759"/>
<dbReference type="PhylomeDB" id="Q66HW4"/>
<dbReference type="TreeFam" id="TF324431"/>
<dbReference type="PRO" id="PR:Q66HW4"/>
<dbReference type="Proteomes" id="UP000000437">
    <property type="component" value="Chromosome 19"/>
</dbReference>
<dbReference type="Bgee" id="ENSDARG00000059354">
    <property type="expression patterns" value="Expressed in intestine and 27 other cell types or tissues"/>
</dbReference>
<dbReference type="GO" id="GO:0005765">
    <property type="term" value="C:lysosomal membrane"/>
    <property type="evidence" value="ECO:0007669"/>
    <property type="project" value="UniProtKB-SubCell"/>
</dbReference>
<dbReference type="GO" id="GO:0005764">
    <property type="term" value="C:lysosome"/>
    <property type="evidence" value="ECO:0000250"/>
    <property type="project" value="UniProtKB"/>
</dbReference>
<dbReference type="GO" id="GO:0016020">
    <property type="term" value="C:membrane"/>
    <property type="evidence" value="ECO:0000250"/>
    <property type="project" value="UniProtKB"/>
</dbReference>
<dbReference type="GO" id="GO:0061462">
    <property type="term" value="P:protein localization to lysosome"/>
    <property type="evidence" value="ECO:0000250"/>
    <property type="project" value="UniProtKB"/>
</dbReference>
<dbReference type="GO" id="GO:0050821">
    <property type="term" value="P:protein stabilization"/>
    <property type="evidence" value="ECO:0000250"/>
    <property type="project" value="UniProtKB"/>
</dbReference>
<dbReference type="InterPro" id="IPR029382">
    <property type="entry name" value="NCU-G1"/>
</dbReference>
<dbReference type="PANTHER" id="PTHR31981">
    <property type="entry name" value="GLYCOSYLATED LYSOSOMAL MEMBRANE PROTEIN"/>
    <property type="match status" value="1"/>
</dbReference>
<dbReference type="PANTHER" id="PTHR31981:SF1">
    <property type="entry name" value="GLYCOSYLATED LYSOSOMAL MEMBRANE PROTEIN"/>
    <property type="match status" value="1"/>
</dbReference>
<dbReference type="Pfam" id="PF15065">
    <property type="entry name" value="NCU-G1"/>
    <property type="match status" value="1"/>
</dbReference>
<evidence type="ECO:0000250" key="1">
    <source>
        <dbReference type="UniProtKB" id="Q8WWB7"/>
    </source>
</evidence>
<evidence type="ECO:0000250" key="2">
    <source>
        <dbReference type="UniProtKB" id="Q9JHJ3"/>
    </source>
</evidence>
<evidence type="ECO:0000255" key="3"/>
<evidence type="ECO:0000305" key="4"/>
<gene>
    <name type="primary">glmp</name>
    <name type="ORF">si:dkey-263h23.3</name>
    <name type="ORF">zgc:92308</name>
</gene>
<keyword id="KW-0325">Glycoprotein</keyword>
<keyword id="KW-0458">Lysosome</keyword>
<keyword id="KW-0472">Membrane</keyword>
<keyword id="KW-1185">Reference proteome</keyword>
<keyword id="KW-0732">Signal</keyword>
<keyword id="KW-0812">Transmembrane</keyword>
<keyword id="KW-1133">Transmembrane helix</keyword>